<proteinExistence type="inferred from homology"/>
<dbReference type="EC" id="1.97.1.4"/>
<dbReference type="EMBL" id="X93463">
    <property type="protein sequence ID" value="CAA63749.1"/>
    <property type="molecule type" value="Genomic_DNA"/>
</dbReference>
<dbReference type="PIR" id="JC6011">
    <property type="entry name" value="JC6011"/>
</dbReference>
<dbReference type="SMR" id="Q46267"/>
<dbReference type="BioCyc" id="MetaCyc:MONOMER-12104"/>
<dbReference type="GO" id="GO:0005737">
    <property type="term" value="C:cytoplasm"/>
    <property type="evidence" value="ECO:0007669"/>
    <property type="project" value="UniProtKB-SubCell"/>
</dbReference>
<dbReference type="GO" id="GO:0051539">
    <property type="term" value="F:4 iron, 4 sulfur cluster binding"/>
    <property type="evidence" value="ECO:0007669"/>
    <property type="project" value="UniProtKB-KW"/>
</dbReference>
<dbReference type="GO" id="GO:0043365">
    <property type="term" value="F:[formate-C-acetyltransferase]-activating enzyme activity"/>
    <property type="evidence" value="ECO:0007669"/>
    <property type="project" value="UniProtKB-EC"/>
</dbReference>
<dbReference type="GO" id="GO:0046872">
    <property type="term" value="F:metal ion binding"/>
    <property type="evidence" value="ECO:0007669"/>
    <property type="project" value="UniProtKB-KW"/>
</dbReference>
<dbReference type="CDD" id="cd01335">
    <property type="entry name" value="Radical_SAM"/>
    <property type="match status" value="1"/>
</dbReference>
<dbReference type="Gene3D" id="3.20.20.70">
    <property type="entry name" value="Aldolase class I"/>
    <property type="match status" value="1"/>
</dbReference>
<dbReference type="InterPro" id="IPR013785">
    <property type="entry name" value="Aldolase_TIM"/>
</dbReference>
<dbReference type="InterPro" id="IPR034457">
    <property type="entry name" value="Organic_radical-activating"/>
</dbReference>
<dbReference type="InterPro" id="IPR012838">
    <property type="entry name" value="PFL1_activating"/>
</dbReference>
<dbReference type="InterPro" id="IPR034465">
    <property type="entry name" value="Pyruvate_for-lyase_activase"/>
</dbReference>
<dbReference type="InterPro" id="IPR001989">
    <property type="entry name" value="Radical_activat_CS"/>
</dbReference>
<dbReference type="InterPro" id="IPR007197">
    <property type="entry name" value="rSAM"/>
</dbReference>
<dbReference type="NCBIfam" id="TIGR02493">
    <property type="entry name" value="PFLA"/>
    <property type="match status" value="1"/>
</dbReference>
<dbReference type="PANTHER" id="PTHR30352:SF5">
    <property type="entry name" value="PYRUVATE FORMATE-LYASE 1-ACTIVATING ENZYME"/>
    <property type="match status" value="1"/>
</dbReference>
<dbReference type="PANTHER" id="PTHR30352">
    <property type="entry name" value="PYRUVATE FORMATE-LYASE-ACTIVATING ENZYME"/>
    <property type="match status" value="1"/>
</dbReference>
<dbReference type="Pfam" id="PF13353">
    <property type="entry name" value="Fer4_12"/>
    <property type="match status" value="1"/>
</dbReference>
<dbReference type="Pfam" id="PF04055">
    <property type="entry name" value="Radical_SAM"/>
    <property type="match status" value="1"/>
</dbReference>
<dbReference type="SFLD" id="SFLDF00278">
    <property type="entry name" value="pyruvate_formate-lyase_activas"/>
    <property type="match status" value="1"/>
</dbReference>
<dbReference type="SFLD" id="SFLDS00029">
    <property type="entry name" value="Radical_SAM"/>
    <property type="match status" value="1"/>
</dbReference>
<dbReference type="SUPFAM" id="SSF102114">
    <property type="entry name" value="Radical SAM enzymes"/>
    <property type="match status" value="1"/>
</dbReference>
<dbReference type="PROSITE" id="PS01087">
    <property type="entry name" value="RADICAL_ACTIVATING"/>
    <property type="match status" value="1"/>
</dbReference>
<dbReference type="PROSITE" id="PS51918">
    <property type="entry name" value="RADICAL_SAM"/>
    <property type="match status" value="1"/>
</dbReference>
<comment type="function">
    <text>Activation of pyruvate formate-lyase under anaerobic conditions by generation of an organic free radical, using S-adenosylmethionine and reduced flavodoxin as cosubstrates to produce 5'-deoxy-adenosine.</text>
</comment>
<comment type="catalytic activity">
    <reaction>
        <text>glycyl-[formate C-acetyltransferase] + reduced [flavodoxin] + S-adenosyl-L-methionine = glycin-2-yl radical-[formate C-acetyltransferase] + semiquinone [flavodoxin] + 5'-deoxyadenosine + L-methionine + H(+)</text>
        <dbReference type="Rhea" id="RHEA:19225"/>
        <dbReference type="Rhea" id="RHEA-COMP:10622"/>
        <dbReference type="Rhea" id="RHEA-COMP:12190"/>
        <dbReference type="Rhea" id="RHEA-COMP:12191"/>
        <dbReference type="Rhea" id="RHEA-COMP:14480"/>
        <dbReference type="ChEBI" id="CHEBI:15378"/>
        <dbReference type="ChEBI" id="CHEBI:17319"/>
        <dbReference type="ChEBI" id="CHEBI:29947"/>
        <dbReference type="ChEBI" id="CHEBI:32722"/>
        <dbReference type="ChEBI" id="CHEBI:57618"/>
        <dbReference type="ChEBI" id="CHEBI:57844"/>
        <dbReference type="ChEBI" id="CHEBI:59789"/>
        <dbReference type="ChEBI" id="CHEBI:140311"/>
        <dbReference type="EC" id="1.97.1.4"/>
    </reaction>
</comment>
<comment type="cofactor">
    <cofactor evidence="1">
        <name>[4Fe-4S] cluster</name>
        <dbReference type="ChEBI" id="CHEBI:49883"/>
    </cofactor>
    <text evidence="1">Binds 1 [4Fe-4S] cluster. The cluster is coordinated with 3 cysteines and an exchangeable S-adenosyl-L-methionine.</text>
</comment>
<comment type="subcellular location">
    <subcellularLocation>
        <location>Cytoplasm</location>
    </subcellularLocation>
</comment>
<comment type="similarity">
    <text evidence="4">Belongs to the organic radical-activating enzymes family.</text>
</comment>
<accession>Q46267</accession>
<evidence type="ECO:0000250" key="1"/>
<evidence type="ECO:0000250" key="2">
    <source>
        <dbReference type="UniProtKB" id="P0A9N4"/>
    </source>
</evidence>
<evidence type="ECO:0000255" key="3">
    <source>
        <dbReference type="PROSITE-ProRule" id="PRU01266"/>
    </source>
</evidence>
<evidence type="ECO:0000305" key="4"/>
<reference key="1">
    <citation type="journal article" date="1996" name="J. Bacteriol.">
        <title>Molecular characterization of the genes encoding pyruvate formate-lyase and its activating enzyme of Clostridium pasteurianum.</title>
        <authorList>
            <person name="Weidner G."/>
            <person name="Sawers G."/>
        </authorList>
    </citation>
    <scope>NUCLEOTIDE SEQUENCE [GENOMIC DNA]</scope>
</reference>
<keyword id="KW-0004">4Fe-4S</keyword>
<keyword id="KW-0963">Cytoplasm</keyword>
<keyword id="KW-0408">Iron</keyword>
<keyword id="KW-0411">Iron-sulfur</keyword>
<keyword id="KW-0479">Metal-binding</keyword>
<keyword id="KW-0560">Oxidoreductase</keyword>
<keyword id="KW-0949">S-adenosyl-L-methionine</keyword>
<protein>
    <recommendedName>
        <fullName>Pyruvate formate-lyase-activating enzyme</fullName>
        <shortName>PFL-activating enzyme</shortName>
        <ecNumber>1.97.1.4</ecNumber>
    </recommendedName>
    <alternativeName>
        <fullName>Formate-C-acetyltransferase-activating enzyme</fullName>
    </alternativeName>
</protein>
<feature type="chain" id="PRO_0000200529" description="Pyruvate formate-lyase-activating enzyme">
    <location>
        <begin position="1"/>
        <end position="238"/>
    </location>
</feature>
<feature type="domain" description="Radical SAM core" evidence="3">
    <location>
        <begin position="15"/>
        <end position="236"/>
    </location>
</feature>
<feature type="binding site" evidence="2">
    <location>
        <position position="29"/>
    </location>
    <ligand>
        <name>[4Fe-4S] cluster</name>
        <dbReference type="ChEBI" id="CHEBI:49883"/>
        <note>4Fe-4S-S-AdoMet</note>
    </ligand>
</feature>
<feature type="binding site" evidence="2">
    <location>
        <position position="33"/>
    </location>
    <ligand>
        <name>[4Fe-4S] cluster</name>
        <dbReference type="ChEBI" id="CHEBI:49883"/>
        <note>4Fe-4S-S-AdoMet</note>
    </ligand>
</feature>
<feature type="binding site" evidence="2">
    <location>
        <begin position="35"/>
        <end position="37"/>
    </location>
    <ligand>
        <name>S-adenosyl-L-methionine</name>
        <dbReference type="ChEBI" id="CHEBI:59789"/>
    </ligand>
</feature>
<feature type="binding site" evidence="2">
    <location>
        <position position="36"/>
    </location>
    <ligand>
        <name>[4Fe-4S] cluster</name>
        <dbReference type="ChEBI" id="CHEBI:49883"/>
        <note>4Fe-4S-S-AdoMet</note>
    </ligand>
</feature>
<feature type="binding site" evidence="2">
    <location>
        <position position="78"/>
    </location>
    <ligand>
        <name>S-adenosyl-L-methionine</name>
        <dbReference type="ChEBI" id="CHEBI:59789"/>
    </ligand>
</feature>
<feature type="binding site" evidence="2">
    <location>
        <begin position="126"/>
        <end position="128"/>
    </location>
    <ligand>
        <name>S-adenosyl-L-methionine</name>
        <dbReference type="ChEBI" id="CHEBI:59789"/>
    </ligand>
</feature>
<feature type="binding site" evidence="2">
    <location>
        <position position="199"/>
    </location>
    <ligand>
        <name>S-adenosyl-L-methionine</name>
        <dbReference type="ChEBI" id="CHEBI:59789"/>
    </ligand>
</feature>
<organism>
    <name type="scientific">Clostridium pasteurianum</name>
    <dbReference type="NCBI Taxonomy" id="1501"/>
    <lineage>
        <taxon>Bacteria</taxon>
        <taxon>Bacillati</taxon>
        <taxon>Bacillota</taxon>
        <taxon>Clostridia</taxon>
        <taxon>Eubacteriales</taxon>
        <taxon>Clostridiaceae</taxon>
        <taxon>Clostridium</taxon>
    </lineage>
</organism>
<gene>
    <name type="primary">act</name>
</gene>
<sequence length="238" mass="27148">MVMGRIHSIESMGLVDGPGIRTVVFFQGCGLRCSYCHNPDTWNMAGGKELTAEELLKKLLRFKPYFDRSGGGVTFSGGEVLLQPEFLIDILKLCKEQGIHTAIDTAGYGYGNYEEILKHTDLVLLDIKHVDDDGYKCITGKGKRGFDDFLKAVENIGVKVWIRHVIVPTLTDSKENIRKLANIIKNIRNVEKVELLPYHTLGINKYEKLNLDYKLRDIEAMDKEKRKKLEKYLKELLE</sequence>
<name>PFLA_CLOPA</name>